<gene>
    <name evidence="1" type="primary">bioD</name>
    <name type="ordered locus">ASA_2874</name>
</gene>
<proteinExistence type="inferred from homology"/>
<comment type="function">
    <text evidence="1">Catalyzes a mechanistically unusual reaction, the ATP-dependent insertion of CO2 between the N7 and N8 nitrogen atoms of 7,8-diaminopelargonic acid (DAPA, also called 7,8-diammoniononanoate) to form a ureido ring.</text>
</comment>
<comment type="catalytic activity">
    <reaction evidence="1">
        <text>(7R,8S)-7,8-diammoniononanoate + CO2 + ATP = (4R,5S)-dethiobiotin + ADP + phosphate + 3 H(+)</text>
        <dbReference type="Rhea" id="RHEA:15805"/>
        <dbReference type="ChEBI" id="CHEBI:15378"/>
        <dbReference type="ChEBI" id="CHEBI:16526"/>
        <dbReference type="ChEBI" id="CHEBI:30616"/>
        <dbReference type="ChEBI" id="CHEBI:43474"/>
        <dbReference type="ChEBI" id="CHEBI:149469"/>
        <dbReference type="ChEBI" id="CHEBI:149473"/>
        <dbReference type="ChEBI" id="CHEBI:456216"/>
        <dbReference type="EC" id="6.3.3.3"/>
    </reaction>
</comment>
<comment type="cofactor">
    <cofactor evidence="1">
        <name>Mg(2+)</name>
        <dbReference type="ChEBI" id="CHEBI:18420"/>
    </cofactor>
</comment>
<comment type="pathway">
    <text evidence="1">Cofactor biosynthesis; biotin biosynthesis; biotin from 7,8-diaminononanoate: step 1/2.</text>
</comment>
<comment type="subunit">
    <text evidence="1">Homodimer.</text>
</comment>
<comment type="subcellular location">
    <subcellularLocation>
        <location evidence="1">Cytoplasm</location>
    </subcellularLocation>
</comment>
<comment type="similarity">
    <text evidence="1">Belongs to the dethiobiotin synthetase family.</text>
</comment>
<dbReference type="EC" id="6.3.3.3" evidence="1"/>
<dbReference type="EMBL" id="CP000644">
    <property type="protein sequence ID" value="ABO90886.1"/>
    <property type="molecule type" value="Genomic_DNA"/>
</dbReference>
<dbReference type="RefSeq" id="WP_005313009.1">
    <property type="nucleotide sequence ID" value="NC_009348.1"/>
</dbReference>
<dbReference type="SMR" id="A4SPR4"/>
<dbReference type="STRING" id="29491.GCA_000820065_00846"/>
<dbReference type="KEGG" id="asa:ASA_2874"/>
<dbReference type="eggNOG" id="COG0132">
    <property type="taxonomic scope" value="Bacteria"/>
</dbReference>
<dbReference type="HOGENOM" id="CLU_072551_0_0_6"/>
<dbReference type="UniPathway" id="UPA00078">
    <property type="reaction ID" value="UER00161"/>
</dbReference>
<dbReference type="Proteomes" id="UP000000225">
    <property type="component" value="Chromosome"/>
</dbReference>
<dbReference type="GO" id="GO:0005829">
    <property type="term" value="C:cytosol"/>
    <property type="evidence" value="ECO:0007669"/>
    <property type="project" value="TreeGrafter"/>
</dbReference>
<dbReference type="GO" id="GO:0005524">
    <property type="term" value="F:ATP binding"/>
    <property type="evidence" value="ECO:0007669"/>
    <property type="project" value="UniProtKB-UniRule"/>
</dbReference>
<dbReference type="GO" id="GO:0004141">
    <property type="term" value="F:dethiobiotin synthase activity"/>
    <property type="evidence" value="ECO:0007669"/>
    <property type="project" value="UniProtKB-UniRule"/>
</dbReference>
<dbReference type="GO" id="GO:0000287">
    <property type="term" value="F:magnesium ion binding"/>
    <property type="evidence" value="ECO:0007669"/>
    <property type="project" value="UniProtKB-UniRule"/>
</dbReference>
<dbReference type="GO" id="GO:0009102">
    <property type="term" value="P:biotin biosynthetic process"/>
    <property type="evidence" value="ECO:0007669"/>
    <property type="project" value="UniProtKB-UniRule"/>
</dbReference>
<dbReference type="CDD" id="cd03109">
    <property type="entry name" value="DTBS"/>
    <property type="match status" value="1"/>
</dbReference>
<dbReference type="FunFam" id="3.40.50.300:FF:000292">
    <property type="entry name" value="ATP-dependent dethiobiotin synthetase BioD"/>
    <property type="match status" value="1"/>
</dbReference>
<dbReference type="Gene3D" id="3.40.50.300">
    <property type="entry name" value="P-loop containing nucleotide triphosphate hydrolases"/>
    <property type="match status" value="1"/>
</dbReference>
<dbReference type="HAMAP" id="MF_00336">
    <property type="entry name" value="BioD"/>
    <property type="match status" value="1"/>
</dbReference>
<dbReference type="InterPro" id="IPR004472">
    <property type="entry name" value="DTB_synth_BioD"/>
</dbReference>
<dbReference type="InterPro" id="IPR027417">
    <property type="entry name" value="P-loop_NTPase"/>
</dbReference>
<dbReference type="NCBIfam" id="TIGR00347">
    <property type="entry name" value="bioD"/>
    <property type="match status" value="1"/>
</dbReference>
<dbReference type="PANTHER" id="PTHR43210">
    <property type="entry name" value="DETHIOBIOTIN SYNTHETASE"/>
    <property type="match status" value="1"/>
</dbReference>
<dbReference type="PANTHER" id="PTHR43210:SF5">
    <property type="entry name" value="DETHIOBIOTIN SYNTHETASE"/>
    <property type="match status" value="1"/>
</dbReference>
<dbReference type="Pfam" id="PF13500">
    <property type="entry name" value="AAA_26"/>
    <property type="match status" value="1"/>
</dbReference>
<dbReference type="PIRSF" id="PIRSF006755">
    <property type="entry name" value="DTB_synth"/>
    <property type="match status" value="1"/>
</dbReference>
<dbReference type="SUPFAM" id="SSF52540">
    <property type="entry name" value="P-loop containing nucleoside triphosphate hydrolases"/>
    <property type="match status" value="1"/>
</dbReference>
<name>BIOD_AERS4</name>
<organism>
    <name type="scientific">Aeromonas salmonicida (strain A449)</name>
    <dbReference type="NCBI Taxonomy" id="382245"/>
    <lineage>
        <taxon>Bacteria</taxon>
        <taxon>Pseudomonadati</taxon>
        <taxon>Pseudomonadota</taxon>
        <taxon>Gammaproteobacteria</taxon>
        <taxon>Aeromonadales</taxon>
        <taxon>Aeromonadaceae</taxon>
        <taxon>Aeromonas</taxon>
    </lineage>
</organism>
<feature type="chain" id="PRO_1000205209" description="ATP-dependent dethiobiotin synthetase BioD">
    <location>
        <begin position="1"/>
        <end position="226"/>
    </location>
</feature>
<feature type="active site" evidence="1">
    <location>
        <position position="38"/>
    </location>
</feature>
<feature type="binding site" evidence="1">
    <location>
        <begin position="13"/>
        <end position="18"/>
    </location>
    <ligand>
        <name>ATP</name>
        <dbReference type="ChEBI" id="CHEBI:30616"/>
    </ligand>
</feature>
<feature type="binding site" evidence="1">
    <location>
        <position position="17"/>
    </location>
    <ligand>
        <name>Mg(2+)</name>
        <dbReference type="ChEBI" id="CHEBI:18420"/>
    </ligand>
</feature>
<feature type="binding site" evidence="1">
    <location>
        <position position="55"/>
    </location>
    <ligand>
        <name>ATP</name>
        <dbReference type="ChEBI" id="CHEBI:30616"/>
    </ligand>
</feature>
<feature type="binding site" evidence="1">
    <location>
        <position position="55"/>
    </location>
    <ligand>
        <name>Mg(2+)</name>
        <dbReference type="ChEBI" id="CHEBI:18420"/>
    </ligand>
</feature>
<feature type="binding site" evidence="1">
    <location>
        <begin position="117"/>
        <end position="120"/>
    </location>
    <ligand>
        <name>ATP</name>
        <dbReference type="ChEBI" id="CHEBI:30616"/>
    </ligand>
</feature>
<feature type="binding site" evidence="1">
    <location>
        <position position="117"/>
    </location>
    <ligand>
        <name>Mg(2+)</name>
        <dbReference type="ChEBI" id="CHEBI:18420"/>
    </ligand>
</feature>
<feature type="binding site" evidence="1">
    <location>
        <begin position="177"/>
        <end position="178"/>
    </location>
    <ligand>
        <name>ATP</name>
        <dbReference type="ChEBI" id="CHEBI:30616"/>
    </ligand>
</feature>
<feature type="binding site" evidence="1">
    <location>
        <begin position="206"/>
        <end position="208"/>
    </location>
    <ligand>
        <name>ATP</name>
        <dbReference type="ChEBI" id="CHEBI:30616"/>
    </ligand>
</feature>
<feature type="binding site" evidence="1">
    <location>
        <position position="213"/>
    </location>
    <ligand>
        <name>ATP</name>
        <dbReference type="ChEBI" id="CHEBI:30616"/>
    </ligand>
</feature>
<evidence type="ECO:0000255" key="1">
    <source>
        <dbReference type="HAMAP-Rule" id="MF_00336"/>
    </source>
</evidence>
<accession>A4SPR4</accession>
<keyword id="KW-0067">ATP-binding</keyword>
<keyword id="KW-0093">Biotin biosynthesis</keyword>
<keyword id="KW-0963">Cytoplasm</keyword>
<keyword id="KW-0436">Ligase</keyword>
<keyword id="KW-0460">Magnesium</keyword>
<keyword id="KW-0479">Metal-binding</keyword>
<keyword id="KW-0547">Nucleotide-binding</keyword>
<reference key="1">
    <citation type="journal article" date="2008" name="BMC Genomics">
        <title>The genome of Aeromonas salmonicida subsp. salmonicida A449: insights into the evolution of a fish pathogen.</title>
        <authorList>
            <person name="Reith M.E."/>
            <person name="Singh R.K."/>
            <person name="Curtis B."/>
            <person name="Boyd J.M."/>
            <person name="Bouevitch A."/>
            <person name="Kimball J."/>
            <person name="Munholland J."/>
            <person name="Murphy C."/>
            <person name="Sarty D."/>
            <person name="Williams J."/>
            <person name="Nash J.H."/>
            <person name="Johnson S.C."/>
            <person name="Brown L.L."/>
        </authorList>
    </citation>
    <scope>NUCLEOTIDE SEQUENCE [LARGE SCALE GENOMIC DNA]</scope>
    <source>
        <strain>A449</strain>
    </source>
</reference>
<protein>
    <recommendedName>
        <fullName evidence="1">ATP-dependent dethiobiotin synthetase BioD</fullName>
        <ecNumber evidence="1">6.3.3.3</ecNumber>
    </recommendedName>
    <alternativeName>
        <fullName evidence="1">DTB synthetase</fullName>
        <shortName evidence="1">DTBS</shortName>
    </alternativeName>
    <alternativeName>
        <fullName evidence="1">Dethiobiotin synthase</fullName>
    </alternativeName>
</protein>
<sequence length="226" mass="24508">MVKSFFITGTDTDVGKTLVARTLLLEFVAHGIQCAGYKPISAGCARTPDGLRNLDAVLLQEAANLSLPYDMVNPYAFEPPIAPHIAASEARDAITLKGLSDGLRQIEQAGAELVVVEGAGGWFLPLDRKHLLSDWVKQENIPVIMVVGAKLGCLNHALLTFAAIRNDNLPVAGWVMNRLYGSMSHYQENLDTLRGLLPAPFLGEIPFVNNPLEADLRGRLDISPLL</sequence>